<organism>
    <name type="scientific">Shigella sonnei</name>
    <dbReference type="NCBI Taxonomy" id="624"/>
    <lineage>
        <taxon>Bacteria</taxon>
        <taxon>Pseudomonadati</taxon>
        <taxon>Pseudomonadota</taxon>
        <taxon>Gammaproteobacteria</taxon>
        <taxon>Enterobacterales</taxon>
        <taxon>Enterobacteriaceae</taxon>
        <taxon>Shigella</taxon>
    </lineage>
</organism>
<protein>
    <recommendedName>
        <fullName>Surface presentation of antigens protein SpaQ</fullName>
    </recommendedName>
    <alternativeName>
        <fullName>Protein spa9</fullName>
    </alternativeName>
</protein>
<geneLocation type="plasmid">
    <name>pINV</name>
</geneLocation>
<reference key="1">
    <citation type="submission" date="1995-05" db="EMBL/GenBank/DDBJ databases">
        <title>Comparison and high conservation of nucleotide sequences of spa-mxi regions between S.sonnei and S.flexneri -- identification of a new gene coding plausible membrane protein.</title>
        <authorList>
            <person name="Arakawa E."/>
            <person name="Kato J."/>
            <person name="Ito K."/>
            <person name="Watanabe H."/>
        </authorList>
    </citation>
    <scope>NUCLEOTIDE SEQUENCE [GENOMIC DNA]</scope>
    <source>
        <strain>HW383</strain>
    </source>
</reference>
<gene>
    <name type="primary">spaQ</name>
    <name type="synonym">spa9</name>
</gene>
<evidence type="ECO:0000250" key="1"/>
<evidence type="ECO:0000255" key="2"/>
<evidence type="ECO:0000305" key="3"/>
<dbReference type="EMBL" id="D50601">
    <property type="protein sequence ID" value="BAA09163.1"/>
    <property type="status" value="ALT_INIT"/>
    <property type="molecule type" value="Genomic_DNA"/>
</dbReference>
<dbReference type="RefSeq" id="WP_001280545.1">
    <property type="nucleotide sequence ID" value="NZ_WHSK01000261.1"/>
</dbReference>
<dbReference type="RefSeq" id="WP_053001425.1">
    <property type="nucleotide sequence ID" value="NZ_CXJX01000276.1"/>
</dbReference>
<dbReference type="SMR" id="P0A1M5"/>
<dbReference type="STRING" id="216599.GCA_000283715_05245"/>
<dbReference type="OMA" id="GWYGETL"/>
<dbReference type="GO" id="GO:0005886">
    <property type="term" value="C:plasma membrane"/>
    <property type="evidence" value="ECO:0007669"/>
    <property type="project" value="UniProtKB-SubCell"/>
</dbReference>
<dbReference type="GO" id="GO:0009306">
    <property type="term" value="P:protein secretion"/>
    <property type="evidence" value="ECO:0007669"/>
    <property type="project" value="InterPro"/>
</dbReference>
<dbReference type="InterPro" id="IPR002191">
    <property type="entry name" value="Bac_export_3"/>
</dbReference>
<dbReference type="InterPro" id="IPR006306">
    <property type="entry name" value="T3SS_HrpO"/>
</dbReference>
<dbReference type="NCBIfam" id="TIGR01403">
    <property type="entry name" value="fliQ_rel_III"/>
    <property type="match status" value="1"/>
</dbReference>
<dbReference type="NCBIfam" id="NF011861">
    <property type="entry name" value="PRK15333.1"/>
    <property type="match status" value="1"/>
</dbReference>
<dbReference type="PANTHER" id="PTHR34040">
    <property type="entry name" value="FLAGELLAR BIOSYNTHETIC PROTEIN FLIQ"/>
    <property type="match status" value="1"/>
</dbReference>
<dbReference type="PANTHER" id="PTHR34040:SF7">
    <property type="entry name" value="SURFACE PRESENTATION OF ANTIGENS PROTEIN SPAQ"/>
    <property type="match status" value="1"/>
</dbReference>
<dbReference type="Pfam" id="PF01313">
    <property type="entry name" value="Bac_export_3"/>
    <property type="match status" value="1"/>
</dbReference>
<dbReference type="PRINTS" id="PR00952">
    <property type="entry name" value="TYPE3IMQPROT"/>
</dbReference>
<sequence>MSDIVYMGNKALYLILIFSLWPVGIATVIGLSIGLLQTVTQLQEQTLPFGIKLIGVSISLLLLSGWYGEVLLSFCHEIMFLIKSGV</sequence>
<comment type="function">
    <text evidence="1">Required for surface presentation of invasion plasmid antigens. Could play a role in preserving the translocation competence of the Ipa antigens. Required for invasion and for secretion of the three Ipa proteins (By similarity).</text>
</comment>
<comment type="subcellular location">
    <subcellularLocation>
        <location evidence="3">Cell membrane</location>
        <topology evidence="3">Multi-pass membrane protein</topology>
    </subcellularLocation>
</comment>
<comment type="similarity">
    <text evidence="3">Belongs to the FliQ/MopD/SpaQ family.</text>
</comment>
<comment type="sequence caution" evidence="3">
    <conflict type="erroneous initiation">
        <sequence resource="EMBL-CDS" id="BAA09163"/>
    </conflict>
    <text>Truncated N-terminus.</text>
</comment>
<proteinExistence type="inferred from homology"/>
<keyword id="KW-1003">Cell membrane</keyword>
<keyword id="KW-0472">Membrane</keyword>
<keyword id="KW-0614">Plasmid</keyword>
<keyword id="KW-0812">Transmembrane</keyword>
<keyword id="KW-1133">Transmembrane helix</keyword>
<keyword id="KW-0843">Virulence</keyword>
<feature type="chain" id="PRO_0000129111" description="Surface presentation of antigens protein SpaQ">
    <location>
        <begin position="1"/>
        <end position="86"/>
    </location>
</feature>
<feature type="transmembrane region" description="Helical" evidence="2">
    <location>
        <begin position="11"/>
        <end position="31"/>
    </location>
</feature>
<feature type="transmembrane region" description="Helical" evidence="2">
    <location>
        <begin position="54"/>
        <end position="74"/>
    </location>
</feature>
<accession>P0A1M5</accession>
<accession>P40705</accession>
<accession>Q55297</accession>
<name>SPAQ_SHISO</name>